<evidence type="ECO:0000250" key="1"/>
<evidence type="ECO:0000250" key="2">
    <source>
        <dbReference type="UniProtKB" id="P00157"/>
    </source>
</evidence>
<evidence type="ECO:0000255" key="3">
    <source>
        <dbReference type="PROSITE-ProRule" id="PRU00967"/>
    </source>
</evidence>
<evidence type="ECO:0000255" key="4">
    <source>
        <dbReference type="PROSITE-ProRule" id="PRU00968"/>
    </source>
</evidence>
<keyword id="KW-0249">Electron transport</keyword>
<keyword id="KW-0349">Heme</keyword>
<keyword id="KW-0408">Iron</keyword>
<keyword id="KW-0472">Membrane</keyword>
<keyword id="KW-0479">Metal-binding</keyword>
<keyword id="KW-0496">Mitochondrion</keyword>
<keyword id="KW-0999">Mitochondrion inner membrane</keyword>
<keyword id="KW-0679">Respiratory chain</keyword>
<keyword id="KW-0812">Transmembrane</keyword>
<keyword id="KW-1133">Transmembrane helix</keyword>
<keyword id="KW-0813">Transport</keyword>
<keyword id="KW-0830">Ubiquinone</keyword>
<geneLocation type="mitochondrion"/>
<dbReference type="EMBL" id="U66503">
    <property type="protein sequence ID" value="AAB06778.1"/>
    <property type="molecule type" value="Genomic_DNA"/>
</dbReference>
<dbReference type="EMBL" id="U66504">
    <property type="protein sequence ID" value="AAB06779.1"/>
    <property type="molecule type" value="Genomic_DNA"/>
</dbReference>
<dbReference type="SMR" id="Q95738"/>
<dbReference type="GO" id="GO:0005743">
    <property type="term" value="C:mitochondrial inner membrane"/>
    <property type="evidence" value="ECO:0007669"/>
    <property type="project" value="UniProtKB-SubCell"/>
</dbReference>
<dbReference type="GO" id="GO:0045275">
    <property type="term" value="C:respiratory chain complex III"/>
    <property type="evidence" value="ECO:0007669"/>
    <property type="project" value="InterPro"/>
</dbReference>
<dbReference type="GO" id="GO:0046872">
    <property type="term" value="F:metal ion binding"/>
    <property type="evidence" value="ECO:0007669"/>
    <property type="project" value="UniProtKB-KW"/>
</dbReference>
<dbReference type="GO" id="GO:0008121">
    <property type="term" value="F:ubiquinol-cytochrome-c reductase activity"/>
    <property type="evidence" value="ECO:0007669"/>
    <property type="project" value="InterPro"/>
</dbReference>
<dbReference type="GO" id="GO:0006122">
    <property type="term" value="P:mitochondrial electron transport, ubiquinol to cytochrome c"/>
    <property type="evidence" value="ECO:0007669"/>
    <property type="project" value="TreeGrafter"/>
</dbReference>
<dbReference type="CDD" id="cd00290">
    <property type="entry name" value="cytochrome_b_C"/>
    <property type="match status" value="1"/>
</dbReference>
<dbReference type="CDD" id="cd00284">
    <property type="entry name" value="Cytochrome_b_N"/>
    <property type="match status" value="1"/>
</dbReference>
<dbReference type="FunFam" id="1.20.810.10:FF:000002">
    <property type="entry name" value="Cytochrome b"/>
    <property type="match status" value="1"/>
</dbReference>
<dbReference type="Gene3D" id="1.20.810.10">
    <property type="entry name" value="Cytochrome Bc1 Complex, Chain C"/>
    <property type="match status" value="1"/>
</dbReference>
<dbReference type="InterPro" id="IPR005798">
    <property type="entry name" value="Cyt_b/b6_C"/>
</dbReference>
<dbReference type="InterPro" id="IPR036150">
    <property type="entry name" value="Cyt_b/b6_C_sf"/>
</dbReference>
<dbReference type="InterPro" id="IPR005797">
    <property type="entry name" value="Cyt_b/b6_N"/>
</dbReference>
<dbReference type="InterPro" id="IPR027387">
    <property type="entry name" value="Cytb/b6-like_sf"/>
</dbReference>
<dbReference type="InterPro" id="IPR030689">
    <property type="entry name" value="Cytochrome_b"/>
</dbReference>
<dbReference type="InterPro" id="IPR048260">
    <property type="entry name" value="Cytochrome_b_C_euk/bac"/>
</dbReference>
<dbReference type="InterPro" id="IPR048259">
    <property type="entry name" value="Cytochrome_b_N_euk/bac"/>
</dbReference>
<dbReference type="InterPro" id="IPR016174">
    <property type="entry name" value="Di-haem_cyt_TM"/>
</dbReference>
<dbReference type="PANTHER" id="PTHR19271">
    <property type="entry name" value="CYTOCHROME B"/>
    <property type="match status" value="1"/>
</dbReference>
<dbReference type="PANTHER" id="PTHR19271:SF16">
    <property type="entry name" value="CYTOCHROME B"/>
    <property type="match status" value="1"/>
</dbReference>
<dbReference type="Pfam" id="PF00032">
    <property type="entry name" value="Cytochrom_B_C"/>
    <property type="match status" value="1"/>
</dbReference>
<dbReference type="Pfam" id="PF00033">
    <property type="entry name" value="Cytochrome_B"/>
    <property type="match status" value="1"/>
</dbReference>
<dbReference type="PIRSF" id="PIRSF038885">
    <property type="entry name" value="COB"/>
    <property type="match status" value="1"/>
</dbReference>
<dbReference type="SUPFAM" id="SSF81648">
    <property type="entry name" value="a domain/subunit of cytochrome bc1 complex (Ubiquinol-cytochrome c reductase)"/>
    <property type="match status" value="1"/>
</dbReference>
<dbReference type="SUPFAM" id="SSF81342">
    <property type="entry name" value="Transmembrane di-heme cytochromes"/>
    <property type="match status" value="1"/>
</dbReference>
<dbReference type="PROSITE" id="PS51003">
    <property type="entry name" value="CYTB_CTER"/>
    <property type="match status" value="1"/>
</dbReference>
<dbReference type="PROSITE" id="PS51002">
    <property type="entry name" value="CYTB_NTER"/>
    <property type="match status" value="1"/>
</dbReference>
<gene>
    <name type="primary">MT-CYB</name>
    <name type="synonym">COB</name>
    <name type="synonym">CYTB</name>
    <name type="synonym">MTCYB</name>
</gene>
<protein>
    <recommendedName>
        <fullName>Cytochrome b</fullName>
    </recommendedName>
    <alternativeName>
        <fullName>Complex III subunit 3</fullName>
    </alternativeName>
    <alternativeName>
        <fullName>Complex III subunit III</fullName>
    </alternativeName>
    <alternativeName>
        <fullName>Cytochrome b-c1 complex subunit 3</fullName>
    </alternativeName>
    <alternativeName>
        <fullName>Ubiquinol-cytochrome-c reductase complex cytochrome b subunit</fullName>
    </alternativeName>
</protein>
<accession>Q95738</accession>
<comment type="function">
    <text evidence="2">Component of the ubiquinol-cytochrome c reductase complex (complex III or cytochrome b-c1 complex) that is part of the mitochondrial respiratory chain. The b-c1 complex mediates electron transfer from ubiquinol to cytochrome c. Contributes to the generation of a proton gradient across the mitochondrial membrane that is then used for ATP synthesis.</text>
</comment>
<comment type="cofactor">
    <cofactor evidence="2">
        <name>heme b</name>
        <dbReference type="ChEBI" id="CHEBI:60344"/>
    </cofactor>
    <text evidence="2">Binds 2 heme b groups non-covalently.</text>
</comment>
<comment type="subunit">
    <text evidence="2">The cytochrome bc1 complex contains 11 subunits: 3 respiratory subunits (MT-CYB, CYC1 and UQCRFS1), 2 core proteins (UQCRC1 and UQCRC2) and 6 low-molecular weight proteins (UQCRH/QCR6, UQCRB/QCR7, UQCRQ/QCR8, UQCR10/QCR9, UQCR11/QCR10 and a cleavage product of UQCRFS1). This cytochrome bc1 complex then forms a dimer.</text>
</comment>
<comment type="subcellular location">
    <subcellularLocation>
        <location evidence="2">Mitochondrion inner membrane</location>
        <topology evidence="2">Multi-pass membrane protein</topology>
    </subcellularLocation>
</comment>
<comment type="miscellaneous">
    <text evidence="1">Heme 1 (or BL or b562) is low-potential and absorbs at about 562 nm, and heme 2 (or BH or b566) is high-potential and absorbs at about 566 nm.</text>
</comment>
<comment type="similarity">
    <text evidence="3 4">Belongs to the cytochrome b family.</text>
</comment>
<comment type="caution">
    <text evidence="2">The full-length protein contains only eight transmembrane helices, not nine as predicted by bioinformatics tools.</text>
</comment>
<organism>
    <name type="scientific">Artibeus jamaicensis</name>
    <name type="common">Jamaican fruit-eating bat</name>
    <dbReference type="NCBI Taxonomy" id="9417"/>
    <lineage>
        <taxon>Eukaryota</taxon>
        <taxon>Metazoa</taxon>
        <taxon>Chordata</taxon>
        <taxon>Craniata</taxon>
        <taxon>Vertebrata</taxon>
        <taxon>Euteleostomi</taxon>
        <taxon>Mammalia</taxon>
        <taxon>Eutheria</taxon>
        <taxon>Laurasiatheria</taxon>
        <taxon>Chiroptera</taxon>
        <taxon>Yangochiroptera</taxon>
        <taxon>Phyllostomidae</taxon>
        <taxon>Stenodermatinae</taxon>
        <taxon>Artibeus</taxon>
    </lineage>
</organism>
<proteinExistence type="inferred from homology"/>
<feature type="chain" id="PRO_0000060636" description="Cytochrome b">
    <location>
        <begin position="1"/>
        <end position="379"/>
    </location>
</feature>
<feature type="transmembrane region" description="Helical" evidence="2">
    <location>
        <begin position="33"/>
        <end position="53"/>
    </location>
</feature>
<feature type="transmembrane region" description="Helical" evidence="2">
    <location>
        <begin position="77"/>
        <end position="98"/>
    </location>
</feature>
<feature type="transmembrane region" description="Helical" evidence="2">
    <location>
        <begin position="113"/>
        <end position="133"/>
    </location>
</feature>
<feature type="transmembrane region" description="Helical" evidence="2">
    <location>
        <begin position="178"/>
        <end position="198"/>
    </location>
</feature>
<feature type="transmembrane region" description="Helical" evidence="2">
    <location>
        <begin position="226"/>
        <end position="246"/>
    </location>
</feature>
<feature type="transmembrane region" description="Helical" evidence="2">
    <location>
        <begin position="288"/>
        <end position="308"/>
    </location>
</feature>
<feature type="transmembrane region" description="Helical" evidence="2">
    <location>
        <begin position="320"/>
        <end position="340"/>
    </location>
</feature>
<feature type="transmembrane region" description="Helical" evidence="2">
    <location>
        <begin position="347"/>
        <end position="367"/>
    </location>
</feature>
<feature type="binding site" description="axial binding residue" evidence="2">
    <location>
        <position position="83"/>
    </location>
    <ligand>
        <name>heme b</name>
        <dbReference type="ChEBI" id="CHEBI:60344"/>
        <label>b562</label>
    </ligand>
    <ligandPart>
        <name>Fe</name>
        <dbReference type="ChEBI" id="CHEBI:18248"/>
    </ligandPart>
</feature>
<feature type="binding site" description="axial binding residue" evidence="2">
    <location>
        <position position="97"/>
    </location>
    <ligand>
        <name>heme b</name>
        <dbReference type="ChEBI" id="CHEBI:60344"/>
        <label>b566</label>
    </ligand>
    <ligandPart>
        <name>Fe</name>
        <dbReference type="ChEBI" id="CHEBI:18248"/>
    </ligandPart>
</feature>
<feature type="binding site" description="axial binding residue" evidence="2">
    <location>
        <position position="182"/>
    </location>
    <ligand>
        <name>heme b</name>
        <dbReference type="ChEBI" id="CHEBI:60344"/>
        <label>b562</label>
    </ligand>
    <ligandPart>
        <name>Fe</name>
        <dbReference type="ChEBI" id="CHEBI:18248"/>
    </ligandPart>
</feature>
<feature type="binding site" description="axial binding residue" evidence="2">
    <location>
        <position position="196"/>
    </location>
    <ligand>
        <name>heme b</name>
        <dbReference type="ChEBI" id="CHEBI:60344"/>
        <label>b566</label>
    </ligand>
    <ligandPart>
        <name>Fe</name>
        <dbReference type="ChEBI" id="CHEBI:18248"/>
    </ligandPart>
</feature>
<feature type="binding site" evidence="2">
    <location>
        <position position="201"/>
    </location>
    <ligand>
        <name>a ubiquinone</name>
        <dbReference type="ChEBI" id="CHEBI:16389"/>
    </ligand>
</feature>
<reference key="1">
    <citation type="submission" date="1996-08" db="EMBL/GenBank/DDBJ databases">
        <title>Phylogenetic accuracy, stability, and congruence: relationships within and among the New World bat genera Artibeus, Dermanura, and Koopmania.</title>
        <authorList>
            <person name="den Bussche R.A."/>
            <person name="Hudgeons J.L."/>
            <person name="Baker R.J."/>
        </authorList>
    </citation>
    <scope>NUCLEOTIDE SEQUENCE [GENOMIC DNA]</scope>
    <source>
        <strain>Isolate TK 17303 / AMNH 267202</strain>
        <strain>Isolate TK 18788</strain>
    </source>
</reference>
<name>CYB_ARTJA</name>
<sequence length="379" mass="42695">MTNIRKTHPLLKIINSSFVDLPAPSSLSSWWNFGSLLGVCFGVQILTGLFLAMHYTSDTATAFNSVTHICRDVNYGWLLRYLHANGASMFFICLYLHVGRGLYYGSYTYSETWNIGILLLFAVMATAFMGYVLPWGQMSFWGATVITNLLSAIPYIGTDLVQWIWGGFSVDKATLTRFFAFHFLPPFIVTALVMVHLLFLHETGSNNPTGIPSDPDMIHSHPYYTIKDILGFLVMLTALASLVLFSPDLLGDPDNYIPANPLTTPPHIKPEWYFLFAYAILRSIPNKLGGVLALVMSILILAIVPILHMSKQRSMMFRPLSQCLFWLLVAVLFTLTWIGGQPVEHPYIIIGQTASVLYFLIILFLMPMISLVENYLLKW</sequence>